<evidence type="ECO:0000250" key="1">
    <source>
        <dbReference type="UniProtKB" id="P16753"/>
    </source>
</evidence>
<evidence type="ECO:0000255" key="2">
    <source>
        <dbReference type="HAMAP-Rule" id="MF_04008"/>
    </source>
</evidence>
<evidence type="ECO:0000256" key="3">
    <source>
        <dbReference type="SAM" id="MobiDB-lite"/>
    </source>
</evidence>
<evidence type="ECO:0000305" key="4"/>
<organism>
    <name type="scientific">Gallid herpesvirus 2 (strain Chicken/Md5/ATCC VR-987)</name>
    <name type="common">GaHV-2</name>
    <name type="synonym">Marek's disease herpesvirus type 1</name>
    <dbReference type="NCBI Taxonomy" id="10389"/>
    <lineage>
        <taxon>Viruses</taxon>
        <taxon>Duplodnaviria</taxon>
        <taxon>Heunggongvirae</taxon>
        <taxon>Peploviricota</taxon>
        <taxon>Herviviricetes</taxon>
        <taxon>Herpesvirales</taxon>
        <taxon>Orthoherpesviridae</taxon>
        <taxon>Alphaherpesvirinae</taxon>
        <taxon>Mardivirus</taxon>
        <taxon>Mardivirus gallidalpha2</taxon>
        <taxon>Gallid alphaherpesvirus 2</taxon>
    </lineage>
</organism>
<gene>
    <name type="primary">MDV038</name>
</gene>
<protein>
    <recommendedName>
        <fullName evidence="2">Capsid scaffolding protein</fullName>
    </recommendedName>
    <alternativeName>
        <fullName>Capsid protein P40</fullName>
    </alternativeName>
    <alternativeName>
        <fullName evidence="2">Protease precursor</fullName>
        <shortName evidence="2">pPR</shortName>
    </alternativeName>
    <alternativeName>
        <fullName>Virion structural protein UL26</fullName>
    </alternativeName>
    <component>
        <recommendedName>
            <fullName evidence="2">Assemblin</fullName>
            <ecNumber evidence="2">3.4.21.97</ecNumber>
        </recommendedName>
        <alternativeName>
            <fullName>Capsid protein VP24</fullName>
        </alternativeName>
        <alternativeName>
            <fullName evidence="2">Protease</fullName>
            <shortName evidence="2">Pr</shortName>
        </alternativeName>
    </component>
    <component>
        <recommendedName>
            <fullName evidence="2">Assembly protein</fullName>
            <shortName evidence="2">AP</shortName>
        </recommendedName>
        <alternativeName>
            <fullName evidence="2">Capsid assembly protein</fullName>
        </alternativeName>
        <alternativeName>
            <fullName>Capsid protein VP22A</fullName>
        </alternativeName>
    </component>
</protein>
<name>SCAF_GAHVM</name>
<keyword id="KW-0877">Alternative promoter usage</keyword>
<keyword id="KW-1035">Host cytoplasm</keyword>
<keyword id="KW-1048">Host nucleus</keyword>
<keyword id="KW-0378">Hydrolase</keyword>
<keyword id="KW-0597">Phosphoprotein</keyword>
<keyword id="KW-0645">Protease</keyword>
<keyword id="KW-1185">Reference proteome</keyword>
<keyword id="KW-0720">Serine protease</keyword>
<keyword id="KW-0118">Viral capsid assembly</keyword>
<keyword id="KW-1188">Viral release from host cell</keyword>
<feature type="chain" id="PRO_0000406508" description="Capsid scaffolding protein">
    <location>
        <begin position="1"/>
        <end position="663"/>
    </location>
</feature>
<feature type="chain" id="PRO_0000435876" description="Assemblin" evidence="2">
    <location>
        <begin position="1"/>
        <end position="234"/>
    </location>
</feature>
<feature type="chain" id="PRO_0000435877" description="Assembly protein" evidence="2">
    <location>
        <begin position="235"/>
        <end position="663"/>
    </location>
</feature>
<feature type="region of interest" description="Interaction with pAP" evidence="2">
    <location>
        <begin position="329"/>
        <end position="348"/>
    </location>
</feature>
<feature type="region of interest" description="Disordered" evidence="3">
    <location>
        <begin position="444"/>
        <end position="471"/>
    </location>
</feature>
<feature type="region of interest" description="Disordered" evidence="3">
    <location>
        <begin position="486"/>
        <end position="512"/>
    </location>
</feature>
<feature type="region of interest" description="Disordered" evidence="3">
    <location>
        <begin position="583"/>
        <end position="608"/>
    </location>
</feature>
<feature type="region of interest" description="Interaction with major capsid protein" evidence="2">
    <location>
        <begin position="643"/>
        <end position="663"/>
    </location>
</feature>
<feature type="compositionally biased region" description="Polar residues" evidence="3">
    <location>
        <begin position="490"/>
        <end position="499"/>
    </location>
</feature>
<feature type="compositionally biased region" description="Basic and acidic residues" evidence="3">
    <location>
        <begin position="501"/>
        <end position="512"/>
    </location>
</feature>
<feature type="compositionally biased region" description="Polar residues" evidence="3">
    <location>
        <begin position="587"/>
        <end position="596"/>
    </location>
</feature>
<feature type="active site" description="Charge relay system" evidence="2">
    <location>
        <position position="49"/>
    </location>
</feature>
<feature type="active site" description="Charge relay system" evidence="2">
    <location>
        <position position="116"/>
    </location>
</feature>
<feature type="active site" description="Charge relay system" evidence="2">
    <location>
        <position position="135"/>
    </location>
</feature>
<feature type="site" description="Cleavage; by assemblin; Release site" evidence="2">
    <location>
        <begin position="234"/>
        <end position="235"/>
    </location>
</feature>
<feature type="site" description="Cleavage; by assemblin; Maturation site" evidence="1">
    <location>
        <begin position="638"/>
        <end position="639"/>
    </location>
</feature>
<feature type="splice variant" id="VSP_040827" description="In isoform pAP." evidence="4">
    <location>
        <begin position="1"/>
        <end position="318"/>
    </location>
</feature>
<organismHost>
    <name type="scientific">Gallus gallus</name>
    <name type="common">Chicken</name>
    <dbReference type="NCBI Taxonomy" id="9031"/>
</organismHost>
<proteinExistence type="inferred from homology"/>
<sequence length="663" mass="72681">MNPADHPSVYVAGYLALYGADESDELNIDRKDIRAAIPTPAPLPINIDHRRDCTVGAVLALIDDEHGLFFLGKINCPVMVRTLETAASQEIFSELDNLKPDDKLLYIITNYLPSVSLSSRRLAPGETADETFLAHVALCLLGKRIGTIVTYDLTPEEAIEPFRKLSPNSKATLLSQGKETERLLGEMVWYPSKNAITKALLGTAVNNMLLRDRWQIISERRRMAGITGQKYLQASSFTALTDSMTSNNVSVTHPICENANPGNIQKDEEMQVCISPAQTSETLNAGVLSGCNDFHRLPHSDPASTSDQTNLQSLIEPSMNTQSSRPPGDDFIWVPIKSYNQLVSRNASQPTNIPDIAITSNQPPFIPPALMNTSISGQHSIPSGYAQYGYPTPVGTHNSLLPLGPVNQMGGFQYGPQVYPLSYGQSPLEAKLTALLECMTKEKRPVDEEHRGDDMHTTREERGRRGRKRPYEFDRSIESDLYYPGEFRRSNFSPPQASSMKYEETTGGRHDLSQTGPVLNSLMGAVTSLQKEVERLNGGNLPISNAQSSYGVPNGMHAPVYYSYPPPGTHPTVSWPMGVERPMPSTEGKTSTNSTVIPVPVSDPEAGRNVPITATISQERSDGIQKESIEQSRDTMNASAVAGIHRTSDAGVDVFINQMMAHQ</sequence>
<reference key="1">
    <citation type="journal article" date="2000" name="J. Virol.">
        <title>The genome of a very virulent Marek's disease virus.</title>
        <authorList>
            <person name="Tulman E.R."/>
            <person name="Afonso C.L."/>
            <person name="Lu Z."/>
            <person name="Zsak L."/>
            <person name="Rock D.L."/>
            <person name="Kutish G.F."/>
        </authorList>
    </citation>
    <scope>NUCLEOTIDE SEQUENCE [LARGE SCALE GENOMIC DNA]</scope>
</reference>
<accession>Q9E6P2</accession>
<accession>Q9E6P1</accession>
<dbReference type="EC" id="3.4.21.97" evidence="2"/>
<dbReference type="EMBL" id="AF243438">
    <property type="protein sequence ID" value="AAG14218.1"/>
    <property type="molecule type" value="Genomic_DNA"/>
</dbReference>
<dbReference type="EMBL" id="AF243438">
    <property type="protein sequence ID" value="AAG14219.1"/>
    <property type="status" value="ALT_SEQ"/>
    <property type="molecule type" value="Genomic_DNA"/>
</dbReference>
<dbReference type="RefSeq" id="YP_001033954.1">
    <property type="nucleotide sequence ID" value="NC_002229.3"/>
</dbReference>
<dbReference type="SMR" id="Q9E6P2"/>
<dbReference type="MEROPS" id="S21.001"/>
<dbReference type="GeneID" id="4811499"/>
<dbReference type="KEGG" id="vg:4811499"/>
<dbReference type="KEGG" id="vg:4811500"/>
<dbReference type="Proteomes" id="UP000008072">
    <property type="component" value="Segment"/>
</dbReference>
<dbReference type="GO" id="GO:0030430">
    <property type="term" value="C:host cell cytoplasm"/>
    <property type="evidence" value="ECO:0007669"/>
    <property type="project" value="UniProtKB-SubCell"/>
</dbReference>
<dbReference type="GO" id="GO:0042025">
    <property type="term" value="C:host cell nucleus"/>
    <property type="evidence" value="ECO:0007669"/>
    <property type="project" value="UniProtKB-SubCell"/>
</dbReference>
<dbReference type="GO" id="GO:0042802">
    <property type="term" value="F:identical protein binding"/>
    <property type="evidence" value="ECO:0007669"/>
    <property type="project" value="UniProtKB-UniRule"/>
</dbReference>
<dbReference type="GO" id="GO:0004252">
    <property type="term" value="F:serine-type endopeptidase activity"/>
    <property type="evidence" value="ECO:0007669"/>
    <property type="project" value="UniProtKB-UniRule"/>
</dbReference>
<dbReference type="GO" id="GO:0039708">
    <property type="term" value="P:nuclear capsid assembly"/>
    <property type="evidence" value="ECO:0000314"/>
    <property type="project" value="UniProtKB"/>
</dbReference>
<dbReference type="GO" id="GO:0006508">
    <property type="term" value="P:proteolysis"/>
    <property type="evidence" value="ECO:0007669"/>
    <property type="project" value="UniProtKB-KW"/>
</dbReference>
<dbReference type="GO" id="GO:0019076">
    <property type="term" value="P:viral release from host cell"/>
    <property type="evidence" value="ECO:0007669"/>
    <property type="project" value="UniProtKB-UniRule"/>
</dbReference>
<dbReference type="FunFam" id="3.20.16.10:FF:000001">
    <property type="entry name" value="Capsid scaffolding protein"/>
    <property type="match status" value="1"/>
</dbReference>
<dbReference type="Gene3D" id="3.20.16.10">
    <property type="entry name" value="Herpesvirus/Caudovirus protease domain"/>
    <property type="match status" value="1"/>
</dbReference>
<dbReference type="HAMAP" id="MF_04008">
    <property type="entry name" value="HSV_SCAF"/>
    <property type="match status" value="1"/>
</dbReference>
<dbReference type="InterPro" id="IPR035443">
    <property type="entry name" value="Herpes_virus_sf"/>
</dbReference>
<dbReference type="InterPro" id="IPR001847">
    <property type="entry name" value="Peptidase_S21"/>
</dbReference>
<dbReference type="Pfam" id="PF00716">
    <property type="entry name" value="Peptidase_S21"/>
    <property type="match status" value="1"/>
</dbReference>
<dbReference type="PRINTS" id="PR00236">
    <property type="entry name" value="HSVCAPSIDP40"/>
</dbReference>
<dbReference type="SUPFAM" id="SSF50789">
    <property type="entry name" value="Herpes virus serine proteinase, assemblin"/>
    <property type="match status" value="1"/>
</dbReference>
<comment type="function">
    <molecule>Capsid scaffolding protein</molecule>
    <text evidence="2">Acts as a scaffold protein by binding major capsid protein in the cytoplasm, inducing the nuclear localization of both proteins. Multimerizes in the nucleus such as major capsid protein forms the icosahedral T=16 capsid. Autocatalytic cleavage releases the assembly protein, and subsequently abolishes interaction with major capsid protein. Cleavages products are evicted from the capsid before or during DNA packaging.</text>
</comment>
<comment type="function">
    <molecule>Assemblin</molecule>
    <text evidence="2">Protease that plays an essential role in virion assembly within the nucleus. Catalyzes the cleavage of the assembly protein after formation of the spherical procapsid. By that cleavage, the capsid matures and gains its icosahedral shape. The cleavage sites seem to include -Ala-Ser-, -Ala-Ala-, as well as Ala-Thr bonds. Assemblin and cleavages products are evicted from the capsid before or during DNA packaging.</text>
</comment>
<comment type="function">
    <molecule>Assembly protein</molecule>
    <text evidence="2">Plays a major role in capsid assembly. Acts as a scaffold protein by binding major capsid protein. Multimerizes in the nucleus such as major capsid protein forms the icosahedral T=16 capsid. Cleaved by assemblin after capsid completion. The cleavages products are evicted from the capsid before or during DNA packaging.</text>
</comment>
<comment type="catalytic activity">
    <molecule>Assemblin</molecule>
    <reaction evidence="2">
        <text>Cleaves -Ala-|-Ser- and -Ala-|-Ala- bonds in the scaffold protein.</text>
        <dbReference type="EC" id="3.4.21.97"/>
    </reaction>
</comment>
<comment type="subunit">
    <molecule>Capsid scaffolding protein</molecule>
    <text evidence="2">Homomultimer. Interacts with major capsid protein.</text>
</comment>
<comment type="subunit">
    <molecule>Assemblin</molecule>
    <text evidence="2">Exists in a monomer-dimer equilibrium with the dimer being the active species.</text>
</comment>
<comment type="subunit">
    <molecule>Assembly protein</molecule>
    <text evidence="2">Homomultimer. Interacts with major capsid protein.</text>
</comment>
<comment type="subcellular location">
    <molecule>Capsid scaffolding protein</molecule>
    <subcellularLocation>
        <location evidence="2">Host cytoplasm</location>
    </subcellularLocation>
</comment>
<comment type="subcellular location">
    <molecule>Assemblin</molecule>
    <subcellularLocation>
        <location evidence="2">Host nucleus</location>
    </subcellularLocation>
</comment>
<comment type="subcellular location">
    <molecule>Assembly protein</molecule>
    <subcellularLocation>
        <location evidence="2">Host nucleus</location>
    </subcellularLocation>
</comment>
<comment type="alternative products">
    <event type="alternative promoter"/>
    <isoform>
        <id>Q9E6P2-1</id>
        <name>Capsid scaffolding protein</name>
        <name>pPR</name>
        <name>UL26</name>
        <sequence type="displayed"/>
    </isoform>
    <isoform>
        <id>Q9E6P2-2</id>
        <name>pAP</name>
        <name>Assembly protein</name>
        <name>UL26.5 protein</name>
        <sequence type="described" ref="VSP_040827"/>
    </isoform>
</comment>
<comment type="domain">
    <text evidence="2">Region of interaction between pPR and pAP is called Amino conserved domain (ACD). The region of interaction with major capsid protein is called carboxyl conserved domain (CCD).</text>
</comment>
<comment type="PTM">
    <molecule>Capsid scaffolding protein</molecule>
    <text evidence="2">Capsid scaffolding protein is cleaved by assemblin after formation of the spherical procapsid. As a result, the capsid obtains its mature, icosahedral shape. Cleavages occur at two or more sites: release (R-site) and maturation (M-site).</text>
</comment>
<comment type="similarity">
    <text evidence="2">Belongs to the herpesviridae capsid scaffolding protein family.</text>
</comment>